<accession>Q1C833</accession>
<dbReference type="EMBL" id="CP000308">
    <property type="protein sequence ID" value="ABG13389.1"/>
    <property type="molecule type" value="Genomic_DNA"/>
</dbReference>
<dbReference type="RefSeq" id="WP_002211217.1">
    <property type="nucleotide sequence ID" value="NZ_CP009906.1"/>
</dbReference>
<dbReference type="SMR" id="Q1C833"/>
<dbReference type="GeneID" id="57976620"/>
<dbReference type="KEGG" id="ypa:YPA_1422"/>
<dbReference type="Proteomes" id="UP000001971">
    <property type="component" value="Chromosome"/>
</dbReference>
<dbReference type="GO" id="GO:0005886">
    <property type="term" value="C:plasma membrane"/>
    <property type="evidence" value="ECO:0007669"/>
    <property type="project" value="UniProtKB-SubCell"/>
</dbReference>
<dbReference type="GO" id="GO:0022857">
    <property type="term" value="F:transmembrane transporter activity"/>
    <property type="evidence" value="ECO:0007669"/>
    <property type="project" value="UniProtKB-UniRule"/>
</dbReference>
<dbReference type="CDD" id="cd17329">
    <property type="entry name" value="MFS_MdtH_MDR_like"/>
    <property type="match status" value="1"/>
</dbReference>
<dbReference type="Gene3D" id="1.20.1250.20">
    <property type="entry name" value="MFS general substrate transporter like domains"/>
    <property type="match status" value="1"/>
</dbReference>
<dbReference type="HAMAP" id="MF_01529">
    <property type="entry name" value="MFS_MdtH"/>
    <property type="match status" value="1"/>
</dbReference>
<dbReference type="InterPro" id="IPR011701">
    <property type="entry name" value="MFS"/>
</dbReference>
<dbReference type="InterPro" id="IPR020846">
    <property type="entry name" value="MFS_dom"/>
</dbReference>
<dbReference type="InterPro" id="IPR036259">
    <property type="entry name" value="MFS_trans_sf"/>
</dbReference>
<dbReference type="InterPro" id="IPR050171">
    <property type="entry name" value="MFS_Transporters"/>
</dbReference>
<dbReference type="InterPro" id="IPR022855">
    <property type="entry name" value="Multidrug-R_MdtH"/>
</dbReference>
<dbReference type="NCBIfam" id="NF008650">
    <property type="entry name" value="PRK11646.1"/>
    <property type="match status" value="1"/>
</dbReference>
<dbReference type="PANTHER" id="PTHR23517:SF2">
    <property type="entry name" value="MULTIDRUG RESISTANCE PROTEIN MDTH"/>
    <property type="match status" value="1"/>
</dbReference>
<dbReference type="PANTHER" id="PTHR23517">
    <property type="entry name" value="RESISTANCE PROTEIN MDTM, PUTATIVE-RELATED-RELATED"/>
    <property type="match status" value="1"/>
</dbReference>
<dbReference type="Pfam" id="PF07690">
    <property type="entry name" value="MFS_1"/>
    <property type="match status" value="1"/>
</dbReference>
<dbReference type="SUPFAM" id="SSF103473">
    <property type="entry name" value="MFS general substrate transporter"/>
    <property type="match status" value="1"/>
</dbReference>
<dbReference type="PROSITE" id="PS50850">
    <property type="entry name" value="MFS"/>
    <property type="match status" value="1"/>
</dbReference>
<gene>
    <name evidence="1" type="primary">mdtH</name>
    <name type="ordered locus">YPA_1422</name>
</gene>
<keyword id="KW-0997">Cell inner membrane</keyword>
<keyword id="KW-1003">Cell membrane</keyword>
<keyword id="KW-0472">Membrane</keyword>
<keyword id="KW-0812">Transmembrane</keyword>
<keyword id="KW-1133">Transmembrane helix</keyword>
<keyword id="KW-0813">Transport</keyword>
<proteinExistence type="inferred from homology"/>
<name>MDTH_YERPA</name>
<sequence length="401" mass="44285">MALVSQARSLGKYFLLFDNLLVVLGFFVVFPLISIRFVDQLGWAALVVGLALGLRQLVQQGLGIFGGAIADRFGAKPMIVTGMLMRAAGFALMAMADEPWILWLACALSGLGGTLFDPPRTALVIKLTRPHERGRFYSLLMMQDSAGAVIGALIGSWLLQYDFHFVCWTGAAIFVLAAGWNAWLLPAYRISTVRAPMKEGLMRVLRDRRFVTYVLTLTGYYMLAVQVMLMLPIVVNELAGSPAAVKWMYAIEAALSLTLLYPLARWSEKRFSLEQRLMAGLLIMTLSLFPIGMITHLQTLFMFICFFYMGSILAEPARETLGASLADSRARGSYMGFSRLGLALGGALGYTGGGWMYDTGKTLDMPELPWFLLGIIGLITLAGLYWQFNRRRIESAMLSSS</sequence>
<organism>
    <name type="scientific">Yersinia pestis bv. Antiqua (strain Antiqua)</name>
    <dbReference type="NCBI Taxonomy" id="360102"/>
    <lineage>
        <taxon>Bacteria</taxon>
        <taxon>Pseudomonadati</taxon>
        <taxon>Pseudomonadota</taxon>
        <taxon>Gammaproteobacteria</taxon>
        <taxon>Enterobacterales</taxon>
        <taxon>Yersiniaceae</taxon>
        <taxon>Yersinia</taxon>
    </lineage>
</organism>
<feature type="chain" id="PRO_0000280504" description="Multidrug resistance protein MdtH">
    <location>
        <begin position="1"/>
        <end position="401"/>
    </location>
</feature>
<feature type="transmembrane region" description="Helical" evidence="1">
    <location>
        <begin position="13"/>
        <end position="33"/>
    </location>
</feature>
<feature type="transmembrane region" description="Helical" evidence="1">
    <location>
        <begin position="34"/>
        <end position="54"/>
    </location>
</feature>
<feature type="transmembrane region" description="Helical" evidence="1">
    <location>
        <begin position="99"/>
        <end position="116"/>
    </location>
</feature>
<feature type="transmembrane region" description="Helical" evidence="1">
    <location>
        <begin position="139"/>
        <end position="159"/>
    </location>
</feature>
<feature type="transmembrane region" description="Helical" evidence="1">
    <location>
        <begin position="165"/>
        <end position="185"/>
    </location>
</feature>
<feature type="transmembrane region" description="Helical" evidence="1">
    <location>
        <begin position="214"/>
        <end position="234"/>
    </location>
</feature>
<feature type="transmembrane region" description="Helical" evidence="1">
    <location>
        <begin position="243"/>
        <end position="263"/>
    </location>
</feature>
<feature type="transmembrane region" description="Helical" evidence="1">
    <location>
        <begin position="277"/>
        <end position="297"/>
    </location>
</feature>
<feature type="transmembrane region" description="Helical" evidence="1">
    <location>
        <begin position="299"/>
        <end position="319"/>
    </location>
</feature>
<feature type="transmembrane region" description="Helical" evidence="1">
    <location>
        <begin position="340"/>
        <end position="360"/>
    </location>
</feature>
<feature type="transmembrane region" description="Helical" evidence="1">
    <location>
        <begin position="368"/>
        <end position="388"/>
    </location>
</feature>
<reference key="1">
    <citation type="journal article" date="2006" name="J. Bacteriol.">
        <title>Complete genome sequence of Yersinia pestis strains Antiqua and Nepal516: evidence of gene reduction in an emerging pathogen.</title>
        <authorList>
            <person name="Chain P.S.G."/>
            <person name="Hu P."/>
            <person name="Malfatti S.A."/>
            <person name="Radnedge L."/>
            <person name="Larimer F."/>
            <person name="Vergez L.M."/>
            <person name="Worsham P."/>
            <person name="Chu M.C."/>
            <person name="Andersen G.L."/>
        </authorList>
    </citation>
    <scope>NUCLEOTIDE SEQUENCE [LARGE SCALE GENOMIC DNA]</scope>
    <source>
        <strain>Antiqua</strain>
    </source>
</reference>
<evidence type="ECO:0000255" key="1">
    <source>
        <dbReference type="HAMAP-Rule" id="MF_01529"/>
    </source>
</evidence>
<protein>
    <recommendedName>
        <fullName evidence="1">Multidrug resistance protein MdtH</fullName>
    </recommendedName>
</protein>
<comment type="subcellular location">
    <subcellularLocation>
        <location evidence="1">Cell inner membrane</location>
        <topology evidence="1">Multi-pass membrane protein</topology>
    </subcellularLocation>
</comment>
<comment type="similarity">
    <text evidence="1">Belongs to the major facilitator superfamily. DHA1 family. MdtH (TC 2.A.1.2.21) subfamily.</text>
</comment>